<organism>
    <name type="scientific">Synechococcus elongatus (strain ATCC 33912 / PCC 7942 / FACHB-805)</name>
    <name type="common">Anacystis nidulans R2</name>
    <dbReference type="NCBI Taxonomy" id="1140"/>
    <lineage>
        <taxon>Bacteria</taxon>
        <taxon>Bacillati</taxon>
        <taxon>Cyanobacteriota</taxon>
        <taxon>Cyanophyceae</taxon>
        <taxon>Synechococcales</taxon>
        <taxon>Synechococcaceae</taxon>
        <taxon>Synechococcus</taxon>
    </lineage>
</organism>
<gene>
    <name type="primary">efp</name>
    <name type="ordered locus">Synpcc7942_2565</name>
</gene>
<protein>
    <recommendedName>
        <fullName>Elongation factor P</fullName>
        <shortName>EF-P</shortName>
    </recommendedName>
</protein>
<proteinExistence type="inferred from homology"/>
<reference key="1">
    <citation type="submission" date="1996-05" db="EMBL/GenBank/DDBJ databases">
        <title>Genes encoding biotin carboxyl carrier protein and elongation factor P from cyanobacterium Synechococcus sp. PCC 7942.</title>
        <authorList>
            <person name="Phung L.T."/>
            <person name="Haselkorn R."/>
        </authorList>
    </citation>
    <scope>NUCLEOTIDE SEQUENCE [GENOMIC DNA]</scope>
</reference>
<reference key="2">
    <citation type="submission" date="2005-08" db="EMBL/GenBank/DDBJ databases">
        <title>Complete sequence of chromosome 1 of Synechococcus elongatus PCC 7942.</title>
        <authorList>
            <consortium name="US DOE Joint Genome Institute"/>
            <person name="Copeland A."/>
            <person name="Lucas S."/>
            <person name="Lapidus A."/>
            <person name="Barry K."/>
            <person name="Detter J.C."/>
            <person name="Glavina T."/>
            <person name="Hammon N."/>
            <person name="Israni S."/>
            <person name="Pitluck S."/>
            <person name="Schmutz J."/>
            <person name="Larimer F."/>
            <person name="Land M."/>
            <person name="Kyrpides N."/>
            <person name="Lykidis A."/>
            <person name="Golden S."/>
            <person name="Richardson P."/>
        </authorList>
    </citation>
    <scope>NUCLEOTIDE SEQUENCE [LARGE SCALE GENOMIC DNA]</scope>
    <source>
        <strain>ATCC 33912 / PCC 7942 / FACHB-805</strain>
    </source>
</reference>
<accession>Q54760</accession>
<accession>Q31K24</accession>
<name>EFP_SYNE7</name>
<evidence type="ECO:0000250" key="1"/>
<evidence type="ECO:0000305" key="2"/>
<feature type="chain" id="PRO_0000094352" description="Elongation factor P">
    <location>
        <begin position="1"/>
        <end position="185"/>
    </location>
</feature>
<keyword id="KW-0963">Cytoplasm</keyword>
<keyword id="KW-0251">Elongation factor</keyword>
<keyword id="KW-0648">Protein biosynthesis</keyword>
<keyword id="KW-1185">Reference proteome</keyword>
<dbReference type="EMBL" id="U59235">
    <property type="protein sequence ID" value="AAB82025.1"/>
    <property type="molecule type" value="Genomic_DNA"/>
</dbReference>
<dbReference type="EMBL" id="CP000100">
    <property type="protein sequence ID" value="ABB58595.1"/>
    <property type="molecule type" value="Genomic_DNA"/>
</dbReference>
<dbReference type="PIR" id="T30278">
    <property type="entry name" value="T30278"/>
</dbReference>
<dbReference type="RefSeq" id="WP_011243855.1">
    <property type="nucleotide sequence ID" value="NZ_JACJTX010000001.1"/>
</dbReference>
<dbReference type="SMR" id="Q54760"/>
<dbReference type="STRING" id="1140.Synpcc7942_2565"/>
<dbReference type="PaxDb" id="1140-Synpcc7942_2565"/>
<dbReference type="GeneID" id="72431459"/>
<dbReference type="KEGG" id="syf:Synpcc7942_2565"/>
<dbReference type="eggNOG" id="COG0231">
    <property type="taxonomic scope" value="Bacteria"/>
</dbReference>
<dbReference type="HOGENOM" id="CLU_074944_0_1_3"/>
<dbReference type="OrthoDB" id="9801844at2"/>
<dbReference type="BioCyc" id="SYNEL:SYNPCC7942_2565-MONOMER"/>
<dbReference type="UniPathway" id="UPA00345"/>
<dbReference type="Proteomes" id="UP000889800">
    <property type="component" value="Chromosome"/>
</dbReference>
<dbReference type="GO" id="GO:0005737">
    <property type="term" value="C:cytoplasm"/>
    <property type="evidence" value="ECO:0007669"/>
    <property type="project" value="UniProtKB-SubCell"/>
</dbReference>
<dbReference type="GO" id="GO:0003746">
    <property type="term" value="F:translation elongation factor activity"/>
    <property type="evidence" value="ECO:0007669"/>
    <property type="project" value="UniProtKB-UniRule"/>
</dbReference>
<dbReference type="GO" id="GO:0043043">
    <property type="term" value="P:peptide biosynthetic process"/>
    <property type="evidence" value="ECO:0007669"/>
    <property type="project" value="InterPro"/>
</dbReference>
<dbReference type="CDD" id="cd04470">
    <property type="entry name" value="S1_EF-P_repeat_1"/>
    <property type="match status" value="1"/>
</dbReference>
<dbReference type="CDD" id="cd05794">
    <property type="entry name" value="S1_EF-P_repeat_2"/>
    <property type="match status" value="1"/>
</dbReference>
<dbReference type="FunFam" id="2.40.50.140:FF:000004">
    <property type="entry name" value="Elongation factor P"/>
    <property type="match status" value="1"/>
</dbReference>
<dbReference type="FunFam" id="2.40.50.140:FF:000009">
    <property type="entry name" value="Elongation factor P"/>
    <property type="match status" value="1"/>
</dbReference>
<dbReference type="FunFam" id="2.30.30.30:FF:000040">
    <property type="entry name" value="Organellar elongation factor P"/>
    <property type="match status" value="1"/>
</dbReference>
<dbReference type="Gene3D" id="2.30.30.30">
    <property type="match status" value="1"/>
</dbReference>
<dbReference type="Gene3D" id="2.40.50.140">
    <property type="entry name" value="Nucleic acid-binding proteins"/>
    <property type="match status" value="2"/>
</dbReference>
<dbReference type="HAMAP" id="MF_00141">
    <property type="entry name" value="EF_P"/>
    <property type="match status" value="1"/>
</dbReference>
<dbReference type="InterPro" id="IPR015365">
    <property type="entry name" value="Elong-fact-P_C"/>
</dbReference>
<dbReference type="InterPro" id="IPR012340">
    <property type="entry name" value="NA-bd_OB-fold"/>
</dbReference>
<dbReference type="InterPro" id="IPR014722">
    <property type="entry name" value="Rib_uL2_dom2"/>
</dbReference>
<dbReference type="InterPro" id="IPR020599">
    <property type="entry name" value="Transl_elong_fac_P/YeiP"/>
</dbReference>
<dbReference type="InterPro" id="IPR013185">
    <property type="entry name" value="Transl_elong_KOW-like"/>
</dbReference>
<dbReference type="InterPro" id="IPR001059">
    <property type="entry name" value="Transl_elong_P/YeiP_cen"/>
</dbReference>
<dbReference type="InterPro" id="IPR013852">
    <property type="entry name" value="Transl_elong_P/YeiP_CS"/>
</dbReference>
<dbReference type="InterPro" id="IPR011768">
    <property type="entry name" value="Transl_elongation_fac_P"/>
</dbReference>
<dbReference type="InterPro" id="IPR008991">
    <property type="entry name" value="Translation_prot_SH3-like_sf"/>
</dbReference>
<dbReference type="NCBIfam" id="TIGR00038">
    <property type="entry name" value="efp"/>
    <property type="match status" value="1"/>
</dbReference>
<dbReference type="NCBIfam" id="NF001810">
    <property type="entry name" value="PRK00529.1"/>
    <property type="match status" value="1"/>
</dbReference>
<dbReference type="PANTHER" id="PTHR30053">
    <property type="entry name" value="ELONGATION FACTOR P"/>
    <property type="match status" value="1"/>
</dbReference>
<dbReference type="PANTHER" id="PTHR30053:SF12">
    <property type="entry name" value="ELONGATION FACTOR P (EF-P) FAMILY PROTEIN"/>
    <property type="match status" value="1"/>
</dbReference>
<dbReference type="Pfam" id="PF01132">
    <property type="entry name" value="EFP"/>
    <property type="match status" value="1"/>
</dbReference>
<dbReference type="Pfam" id="PF08207">
    <property type="entry name" value="EFP_N"/>
    <property type="match status" value="1"/>
</dbReference>
<dbReference type="Pfam" id="PF09285">
    <property type="entry name" value="Elong-fact-P_C"/>
    <property type="match status" value="1"/>
</dbReference>
<dbReference type="PIRSF" id="PIRSF005901">
    <property type="entry name" value="EF-P"/>
    <property type="match status" value="1"/>
</dbReference>
<dbReference type="SMART" id="SM01185">
    <property type="entry name" value="EFP"/>
    <property type="match status" value="1"/>
</dbReference>
<dbReference type="SMART" id="SM00841">
    <property type="entry name" value="Elong-fact-P_C"/>
    <property type="match status" value="1"/>
</dbReference>
<dbReference type="SUPFAM" id="SSF50249">
    <property type="entry name" value="Nucleic acid-binding proteins"/>
    <property type="match status" value="2"/>
</dbReference>
<dbReference type="SUPFAM" id="SSF50104">
    <property type="entry name" value="Translation proteins SH3-like domain"/>
    <property type="match status" value="1"/>
</dbReference>
<dbReference type="PROSITE" id="PS01275">
    <property type="entry name" value="EFP"/>
    <property type="match status" value="1"/>
</dbReference>
<comment type="function">
    <text evidence="1">Involved in peptide bond synthesis. Stimulates efficient translation and peptide-bond synthesis on native or reconstituted 70S ribosomes in vitro. Probably functions indirectly by altering the affinity of the ribosome for aminoacyl-tRNA, thus increasing their reactivity as acceptors for peptidyl transferase (By similarity).</text>
</comment>
<comment type="pathway">
    <text>Protein biosynthesis; polypeptide chain elongation.</text>
</comment>
<comment type="subcellular location">
    <subcellularLocation>
        <location evidence="1">Cytoplasm</location>
    </subcellularLocation>
</comment>
<comment type="similarity">
    <text evidence="2">Belongs to the elongation factor P family.</text>
</comment>
<sequence>MISSNDFRTGTTIEIDGAVWRVVEFLHVKPGKGSAFVRTKLKNAKTGNVVEKTFRAGETVPQAVLEKSTLQYTYKDGDDFVFMDMETYEEGRLTAATIGDRVKYLKEGMEANVITWNGQVIEVELPNSVVLEVIETDPGVKGDTATGGTKPAKVETGAQVMVPLFISVGERIKIDTRNDSYLGRE</sequence>